<reference key="1">
    <citation type="journal article" date="2009" name="PLoS Genet.">
        <title>Organised genome dynamics in the Escherichia coli species results in highly diverse adaptive paths.</title>
        <authorList>
            <person name="Touchon M."/>
            <person name="Hoede C."/>
            <person name="Tenaillon O."/>
            <person name="Barbe V."/>
            <person name="Baeriswyl S."/>
            <person name="Bidet P."/>
            <person name="Bingen E."/>
            <person name="Bonacorsi S."/>
            <person name="Bouchier C."/>
            <person name="Bouvet O."/>
            <person name="Calteau A."/>
            <person name="Chiapello H."/>
            <person name="Clermont O."/>
            <person name="Cruveiller S."/>
            <person name="Danchin A."/>
            <person name="Diard M."/>
            <person name="Dossat C."/>
            <person name="Karoui M.E."/>
            <person name="Frapy E."/>
            <person name="Garry L."/>
            <person name="Ghigo J.M."/>
            <person name="Gilles A.M."/>
            <person name="Johnson J."/>
            <person name="Le Bouguenec C."/>
            <person name="Lescat M."/>
            <person name="Mangenot S."/>
            <person name="Martinez-Jehanne V."/>
            <person name="Matic I."/>
            <person name="Nassif X."/>
            <person name="Oztas S."/>
            <person name="Petit M.A."/>
            <person name="Pichon C."/>
            <person name="Rouy Z."/>
            <person name="Ruf C.S."/>
            <person name="Schneider D."/>
            <person name="Tourret J."/>
            <person name="Vacherie B."/>
            <person name="Vallenet D."/>
            <person name="Medigue C."/>
            <person name="Rocha E.P.C."/>
            <person name="Denamur E."/>
        </authorList>
    </citation>
    <scope>NUCLEOTIDE SEQUENCE [LARGE SCALE GENOMIC DNA]</scope>
    <source>
        <strain>ED1a</strain>
    </source>
</reference>
<dbReference type="EMBL" id="CU928162">
    <property type="protein sequence ID" value="CAR09089.2"/>
    <property type="status" value="ALT_INIT"/>
    <property type="molecule type" value="Genomic_DNA"/>
</dbReference>
<dbReference type="RefSeq" id="WP_001307333.1">
    <property type="nucleotide sequence ID" value="NC_011745.1"/>
</dbReference>
<dbReference type="SMR" id="B7MYC3"/>
<dbReference type="KEGG" id="ecq:ECED1_2919"/>
<dbReference type="HOGENOM" id="CLU_072265_1_1_6"/>
<dbReference type="Proteomes" id="UP000000748">
    <property type="component" value="Chromosome"/>
</dbReference>
<dbReference type="GO" id="GO:0006270">
    <property type="term" value="P:DNA replication initiation"/>
    <property type="evidence" value="ECO:0007669"/>
    <property type="project" value="TreeGrafter"/>
</dbReference>
<dbReference type="GO" id="GO:0032297">
    <property type="term" value="P:negative regulation of DNA-templated DNA replication initiation"/>
    <property type="evidence" value="ECO:0007669"/>
    <property type="project" value="InterPro"/>
</dbReference>
<dbReference type="FunFam" id="1.10.8.60:FF:000024">
    <property type="entry name" value="DnaA regulatory inactivator Hda"/>
    <property type="match status" value="1"/>
</dbReference>
<dbReference type="FunFam" id="3.40.50.300:FF:000452">
    <property type="entry name" value="DnaA regulatory inactivator Hda"/>
    <property type="match status" value="1"/>
</dbReference>
<dbReference type="Gene3D" id="1.10.8.60">
    <property type="match status" value="1"/>
</dbReference>
<dbReference type="Gene3D" id="3.40.50.300">
    <property type="entry name" value="P-loop containing nucleotide triphosphate hydrolases"/>
    <property type="match status" value="1"/>
</dbReference>
<dbReference type="HAMAP" id="MF_01158">
    <property type="entry name" value="Hda"/>
    <property type="match status" value="1"/>
</dbReference>
<dbReference type="InterPro" id="IPR020591">
    <property type="entry name" value="Chromosome_initiator_DnaA-like"/>
</dbReference>
<dbReference type="InterPro" id="IPR013317">
    <property type="entry name" value="DnaA_dom"/>
</dbReference>
<dbReference type="InterPro" id="IPR017788">
    <property type="entry name" value="Hda"/>
</dbReference>
<dbReference type="InterPro" id="IPR022864">
    <property type="entry name" value="Hda_Enterobact"/>
</dbReference>
<dbReference type="InterPro" id="IPR055199">
    <property type="entry name" value="Hda_lid"/>
</dbReference>
<dbReference type="InterPro" id="IPR027417">
    <property type="entry name" value="P-loop_NTPase"/>
</dbReference>
<dbReference type="NCBIfam" id="TIGR03420">
    <property type="entry name" value="DnaA_homol_Hda"/>
    <property type="match status" value="1"/>
</dbReference>
<dbReference type="NCBIfam" id="NF005982">
    <property type="entry name" value="PRK08084.1"/>
    <property type="match status" value="1"/>
</dbReference>
<dbReference type="PANTHER" id="PTHR30050">
    <property type="entry name" value="CHROMOSOMAL REPLICATION INITIATOR PROTEIN DNAA"/>
    <property type="match status" value="1"/>
</dbReference>
<dbReference type="PANTHER" id="PTHR30050:SF5">
    <property type="entry name" value="DNAA REGULATORY INACTIVATOR HDA"/>
    <property type="match status" value="1"/>
</dbReference>
<dbReference type="Pfam" id="PF00308">
    <property type="entry name" value="Bac_DnaA"/>
    <property type="match status" value="1"/>
</dbReference>
<dbReference type="Pfam" id="PF22688">
    <property type="entry name" value="Hda_lid"/>
    <property type="match status" value="1"/>
</dbReference>
<dbReference type="PRINTS" id="PR00051">
    <property type="entry name" value="DNAA"/>
</dbReference>
<dbReference type="SUPFAM" id="SSF52540">
    <property type="entry name" value="P-loop containing nucleoside triphosphate hydrolases"/>
    <property type="match status" value="1"/>
</dbReference>
<gene>
    <name evidence="2" type="primary">hda</name>
    <name type="ordered locus">ECED1_2919</name>
</gene>
<accession>B7MYC3</accession>
<feature type="chain" id="PRO_1000164299" description="DnaA regulatory inactivator Hda">
    <location>
        <begin position="1"/>
        <end position="233"/>
    </location>
</feature>
<proteinExistence type="inferred from homology"/>
<comment type="function">
    <text evidence="1">Mediates the interaction of DNA replication initiator protein DnaA with DNA polymerase subunit beta sliding clamp (dnaN). Stimulates hydrolysis of ATP-DnaA to ADP-DnaA, rendering DnaA inactive for reinitiation, a process called regulatory inhibition of DnaA or RIDA (By similarity).</text>
</comment>
<comment type="subunit">
    <text evidence="2">The active form seems to be an ADP-bound monomer. Forms the RIDA complex (regulatory inactivation of DnaA) of ATP-DnaA, ADP-Hda and the DNA-loaded beta sliding clamp (dnaN).</text>
</comment>
<comment type="similarity">
    <text evidence="2">Belongs to the DnaA family. HdA subfamily.</text>
</comment>
<comment type="sequence caution" evidence="3">
    <conflict type="erroneous initiation">
        <sequence resource="EMBL-CDS" id="CAR09089"/>
    </conflict>
</comment>
<sequence>MNTPAQLSLPLYLPDDETFASFWPGDNSSLLAALQNVLRQEHSGYIYLWAREGAGRSHLLHAACAELSQRGDAVGYVPLDKRTWFVPEVLDGMEHLSLVCIDNIECIAGDELWEMAIFDLYNRILESGKTRLLITGDRPPRQLNLGLPDLASRLDWGQIYKLQPLSDEDKLQALQLRARLRGFELPEDVGRFLLKRLDREMRTLFMTLDQLDRASITAQRKLTIPFVKEILKL</sequence>
<evidence type="ECO:0000250" key="1"/>
<evidence type="ECO:0000255" key="2">
    <source>
        <dbReference type="HAMAP-Rule" id="MF_01158"/>
    </source>
</evidence>
<evidence type="ECO:0000305" key="3"/>
<protein>
    <recommendedName>
        <fullName evidence="2">DnaA regulatory inactivator Hda</fullName>
    </recommendedName>
</protein>
<keyword id="KW-0235">DNA replication</keyword>
<keyword id="KW-0236">DNA replication inhibitor</keyword>
<organism>
    <name type="scientific">Escherichia coli O81 (strain ED1a)</name>
    <dbReference type="NCBI Taxonomy" id="585397"/>
    <lineage>
        <taxon>Bacteria</taxon>
        <taxon>Pseudomonadati</taxon>
        <taxon>Pseudomonadota</taxon>
        <taxon>Gammaproteobacteria</taxon>
        <taxon>Enterobacterales</taxon>
        <taxon>Enterobacteriaceae</taxon>
        <taxon>Escherichia</taxon>
    </lineage>
</organism>
<name>HDA_ECO81</name>